<name>RL4_DICDI</name>
<protein>
    <recommendedName>
        <fullName evidence="2">Large ribosomal subunit protein uL4</fullName>
    </recommendedName>
    <alternativeName>
        <fullName>60S ribosomal protein L4</fullName>
    </alternativeName>
</protein>
<reference key="1">
    <citation type="journal article" date="2002" name="Nature">
        <title>Sequence and analysis of chromosome 2 of Dictyostelium discoideum.</title>
        <authorList>
            <person name="Gloeckner G."/>
            <person name="Eichinger L."/>
            <person name="Szafranski K."/>
            <person name="Pachebat J.A."/>
            <person name="Bankier A.T."/>
            <person name="Dear P.H."/>
            <person name="Lehmann R."/>
            <person name="Baumgart C."/>
            <person name="Parra G."/>
            <person name="Abril J.F."/>
            <person name="Guigo R."/>
            <person name="Kumpf K."/>
            <person name="Tunggal B."/>
            <person name="Cox E.C."/>
            <person name="Quail M.A."/>
            <person name="Platzer M."/>
            <person name="Rosenthal A."/>
            <person name="Noegel A.A."/>
        </authorList>
    </citation>
    <scope>NUCLEOTIDE SEQUENCE [LARGE SCALE GENOMIC DNA]</scope>
    <source>
        <strain>AX4</strain>
    </source>
</reference>
<reference key="2">
    <citation type="journal article" date="2005" name="Nature">
        <title>The genome of the social amoeba Dictyostelium discoideum.</title>
        <authorList>
            <person name="Eichinger L."/>
            <person name="Pachebat J.A."/>
            <person name="Gloeckner G."/>
            <person name="Rajandream M.A."/>
            <person name="Sucgang R."/>
            <person name="Berriman M."/>
            <person name="Song J."/>
            <person name="Olsen R."/>
            <person name="Szafranski K."/>
            <person name="Xu Q."/>
            <person name="Tunggal B."/>
            <person name="Kummerfeld S."/>
            <person name="Madera M."/>
            <person name="Konfortov B.A."/>
            <person name="Rivero F."/>
            <person name="Bankier A.T."/>
            <person name="Lehmann R."/>
            <person name="Hamlin N."/>
            <person name="Davies R."/>
            <person name="Gaudet P."/>
            <person name="Fey P."/>
            <person name="Pilcher K."/>
            <person name="Chen G."/>
            <person name="Saunders D."/>
            <person name="Sodergren E.J."/>
            <person name="Davis P."/>
            <person name="Kerhornou A."/>
            <person name="Nie X."/>
            <person name="Hall N."/>
            <person name="Anjard C."/>
            <person name="Hemphill L."/>
            <person name="Bason N."/>
            <person name="Farbrother P."/>
            <person name="Desany B."/>
            <person name="Just E."/>
            <person name="Morio T."/>
            <person name="Rost R."/>
            <person name="Churcher C.M."/>
            <person name="Cooper J."/>
            <person name="Haydock S."/>
            <person name="van Driessche N."/>
            <person name="Cronin A."/>
            <person name="Goodhead I."/>
            <person name="Muzny D.M."/>
            <person name="Mourier T."/>
            <person name="Pain A."/>
            <person name="Lu M."/>
            <person name="Harper D."/>
            <person name="Lindsay R."/>
            <person name="Hauser H."/>
            <person name="James K.D."/>
            <person name="Quiles M."/>
            <person name="Madan Babu M."/>
            <person name="Saito T."/>
            <person name="Buchrieser C."/>
            <person name="Wardroper A."/>
            <person name="Felder M."/>
            <person name="Thangavelu M."/>
            <person name="Johnson D."/>
            <person name="Knights A."/>
            <person name="Loulseged H."/>
            <person name="Mungall K.L."/>
            <person name="Oliver K."/>
            <person name="Price C."/>
            <person name="Quail M.A."/>
            <person name="Urushihara H."/>
            <person name="Hernandez J."/>
            <person name="Rabbinowitsch E."/>
            <person name="Steffen D."/>
            <person name="Sanders M."/>
            <person name="Ma J."/>
            <person name="Kohara Y."/>
            <person name="Sharp S."/>
            <person name="Simmonds M.N."/>
            <person name="Spiegler S."/>
            <person name="Tivey A."/>
            <person name="Sugano S."/>
            <person name="White B."/>
            <person name="Walker D."/>
            <person name="Woodward J.R."/>
            <person name="Winckler T."/>
            <person name="Tanaka Y."/>
            <person name="Shaulsky G."/>
            <person name="Schleicher M."/>
            <person name="Weinstock G.M."/>
            <person name="Rosenthal A."/>
            <person name="Cox E.C."/>
            <person name="Chisholm R.L."/>
            <person name="Gibbs R.A."/>
            <person name="Loomis W.F."/>
            <person name="Platzer M."/>
            <person name="Kay R.R."/>
            <person name="Williams J.G."/>
            <person name="Dear P.H."/>
            <person name="Noegel A.A."/>
            <person name="Barrell B.G."/>
            <person name="Kuspa A."/>
        </authorList>
    </citation>
    <scope>NUCLEOTIDE SEQUENCE [LARGE SCALE GENOMIC DNA]</scope>
    <source>
        <strain>AX4</strain>
    </source>
</reference>
<reference key="3">
    <citation type="submission" date="2009-07" db="UniProtKB">
        <authorList>
            <person name="Bienvenut W.V."/>
            <person name="Ura S."/>
            <person name="Insall R.H."/>
        </authorList>
    </citation>
    <scope>PROTEIN SEQUENCE OF 2-19; 120-138; 142-162; 222-233; 248-268; 275-302 AND 360-369</scope>
    <scope>CLEAVAGE OF INITIATOR METHIONINE</scope>
    <scope>ACETYLATION AT THR-2</scope>
    <scope>IDENTIFICATION BY MASS SPECTROMETRY</scope>
    <source>
        <strain>AX2</strain>
    </source>
</reference>
<dbReference type="EMBL" id="AAFI02000022">
    <property type="protein sequence ID" value="EAL68575.1"/>
    <property type="molecule type" value="Genomic_DNA"/>
</dbReference>
<dbReference type="RefSeq" id="XP_642484.1">
    <property type="nucleotide sequence ID" value="XM_637392.1"/>
</dbReference>
<dbReference type="SMR" id="Q54Z69"/>
<dbReference type="FunCoup" id="Q54Z69">
    <property type="interactions" value="642"/>
</dbReference>
<dbReference type="STRING" id="44689.Q54Z69"/>
<dbReference type="PaxDb" id="44689-DDB0231241"/>
<dbReference type="EnsemblProtists" id="EAL68575">
    <property type="protein sequence ID" value="EAL68575"/>
    <property type="gene ID" value="DDB_G0277803"/>
</dbReference>
<dbReference type="GeneID" id="8621195"/>
<dbReference type="KEGG" id="ddi:DDB_G0277803"/>
<dbReference type="dictyBase" id="DDB_G0277803">
    <property type="gene designation" value="rpl4"/>
</dbReference>
<dbReference type="VEuPathDB" id="AmoebaDB:DDB_G0277803"/>
<dbReference type="eggNOG" id="KOG1475">
    <property type="taxonomic scope" value="Eukaryota"/>
</dbReference>
<dbReference type="HOGENOM" id="CLU_026535_4_0_1"/>
<dbReference type="InParanoid" id="Q54Z69"/>
<dbReference type="OMA" id="ALYGTWR"/>
<dbReference type="PhylomeDB" id="Q54Z69"/>
<dbReference type="Reactome" id="R-DDI-156827">
    <property type="pathway name" value="L13a-mediated translational silencing of Ceruloplasmin expression"/>
</dbReference>
<dbReference type="Reactome" id="R-DDI-1799339">
    <property type="pathway name" value="SRP-dependent cotranslational protein targeting to membrane"/>
</dbReference>
<dbReference type="Reactome" id="R-DDI-72689">
    <property type="pathway name" value="Formation of a pool of free 40S subunits"/>
</dbReference>
<dbReference type="Reactome" id="R-DDI-72706">
    <property type="pathway name" value="GTP hydrolysis and joining of the 60S ribosomal subunit"/>
</dbReference>
<dbReference type="Reactome" id="R-DDI-975956">
    <property type="pathway name" value="Nonsense Mediated Decay (NMD) independent of the Exon Junction Complex (EJC)"/>
</dbReference>
<dbReference type="Reactome" id="R-DDI-975957">
    <property type="pathway name" value="Nonsense Mediated Decay (NMD) enhanced by the Exon Junction Complex (EJC)"/>
</dbReference>
<dbReference type="PRO" id="PR:Q54Z69"/>
<dbReference type="Proteomes" id="UP000002195">
    <property type="component" value="Chromosome 2"/>
</dbReference>
<dbReference type="GO" id="GO:0022625">
    <property type="term" value="C:cytosolic large ribosomal subunit"/>
    <property type="evidence" value="ECO:0000318"/>
    <property type="project" value="GO_Central"/>
</dbReference>
<dbReference type="GO" id="GO:0031012">
    <property type="term" value="C:extracellular matrix"/>
    <property type="evidence" value="ECO:0007005"/>
    <property type="project" value="dictyBase"/>
</dbReference>
<dbReference type="GO" id="GO:0005811">
    <property type="term" value="C:lipid droplet"/>
    <property type="evidence" value="ECO:0007005"/>
    <property type="project" value="dictyBase"/>
</dbReference>
<dbReference type="GO" id="GO:0003723">
    <property type="term" value="F:RNA binding"/>
    <property type="evidence" value="ECO:0000318"/>
    <property type="project" value="GO_Central"/>
</dbReference>
<dbReference type="GO" id="GO:0003735">
    <property type="term" value="F:structural constituent of ribosome"/>
    <property type="evidence" value="ECO:0000318"/>
    <property type="project" value="GO_Central"/>
</dbReference>
<dbReference type="GO" id="GO:0006412">
    <property type="term" value="P:translation"/>
    <property type="evidence" value="ECO:0007669"/>
    <property type="project" value="InterPro"/>
</dbReference>
<dbReference type="FunFam" id="3.40.1370.10:FF:000002">
    <property type="entry name" value="60S ribosomal protein L4"/>
    <property type="match status" value="1"/>
</dbReference>
<dbReference type="Gene3D" id="3.40.1370.10">
    <property type="match status" value="1"/>
</dbReference>
<dbReference type="InterPro" id="IPR025755">
    <property type="entry name" value="Ribos_uL4_C_dom"/>
</dbReference>
<dbReference type="InterPro" id="IPR002136">
    <property type="entry name" value="Ribosomal_uL4"/>
</dbReference>
<dbReference type="InterPro" id="IPR023574">
    <property type="entry name" value="Ribosomal_uL4_dom_sf"/>
</dbReference>
<dbReference type="InterPro" id="IPR013000">
    <property type="entry name" value="Ribosomal_uL4_euk/arc_CS"/>
</dbReference>
<dbReference type="InterPro" id="IPR045240">
    <property type="entry name" value="Ribosomal_uL4_euk/arch"/>
</dbReference>
<dbReference type="PANTHER" id="PTHR19431">
    <property type="entry name" value="60S RIBOSOMAL PROTEIN L4"/>
    <property type="match status" value="1"/>
</dbReference>
<dbReference type="Pfam" id="PF14374">
    <property type="entry name" value="Ribos_L4_asso_C"/>
    <property type="match status" value="1"/>
</dbReference>
<dbReference type="Pfam" id="PF00573">
    <property type="entry name" value="Ribosomal_L4"/>
    <property type="match status" value="1"/>
</dbReference>
<dbReference type="SUPFAM" id="SSF52166">
    <property type="entry name" value="Ribosomal protein L4"/>
    <property type="match status" value="1"/>
</dbReference>
<dbReference type="PROSITE" id="PS00939">
    <property type="entry name" value="RIBOSOMAL_L1E"/>
    <property type="match status" value="1"/>
</dbReference>
<keyword id="KW-0007">Acetylation</keyword>
<keyword id="KW-0903">Direct protein sequencing</keyword>
<keyword id="KW-1185">Reference proteome</keyword>
<keyword id="KW-0687">Ribonucleoprotein</keyword>
<keyword id="KW-0689">Ribosomal protein</keyword>
<sequence length="369" mass="40246">MTTRPFVQVFDAQNKVVGKVKLPNVLTTPIRPDLVNFVHTNLNKNARQAYGAAPYAGEQTSAESWGTGRAVARIPRVPGSGTHRSGQGAFGNMCRGGRMYGPNKTWRRWNRKVNVNQKRYAVVSALAASAVPALVMARGHRINGINEVPLVIANESVDTLQKTKAAVELLKKINAYADVTKVIDSKHIRAGAGKARNRRYKVRKGPLVVVSGKTTVSQALRNIPGVEVANVSRLNLLKLAPGGHLGRFIIWTKSAFEQLDSTFGTFAKSSAQKKGYTLPRPMIANADIVRLVNSDEIQAAVRASKVVVKRPTAPVRRSNPLKNLRAMIKLNPAAVSTRRTQVKSLKSKGIKVSKKNQLRAKLVAATFNQ</sequence>
<organism>
    <name type="scientific">Dictyostelium discoideum</name>
    <name type="common">Social amoeba</name>
    <dbReference type="NCBI Taxonomy" id="44689"/>
    <lineage>
        <taxon>Eukaryota</taxon>
        <taxon>Amoebozoa</taxon>
        <taxon>Evosea</taxon>
        <taxon>Eumycetozoa</taxon>
        <taxon>Dictyostelia</taxon>
        <taxon>Dictyosteliales</taxon>
        <taxon>Dictyosteliaceae</taxon>
        <taxon>Dictyostelium</taxon>
    </lineage>
</organism>
<evidence type="ECO:0000269" key="1">
    <source ref="3"/>
</evidence>
<evidence type="ECO:0000305" key="2"/>
<proteinExistence type="evidence at protein level"/>
<comment type="similarity">
    <text evidence="2">Belongs to the universal ribosomal protein uL4 family.</text>
</comment>
<gene>
    <name type="primary">rpl4</name>
    <name type="ORF">DDB_G0277803</name>
</gene>
<accession>Q54Z69</accession>
<accession>Q86KT2</accession>
<feature type="initiator methionine" description="Removed" evidence="1">
    <location>
        <position position="1"/>
    </location>
</feature>
<feature type="chain" id="PRO_0000323429" description="Large ribosomal subunit protein uL4">
    <location>
        <begin position="2"/>
        <end position="369"/>
    </location>
</feature>
<feature type="modified residue" description="N-acetylthreonine" evidence="1">
    <location>
        <position position="2"/>
    </location>
</feature>